<name>RPOA_AETGR</name>
<feature type="chain" id="PRO_0000296884" description="DNA-directed RNA polymerase subunit alpha">
    <location>
        <begin position="1"/>
        <end position="333"/>
    </location>
</feature>
<feature type="region of interest" description="Alpha N-terminal domain (alpha-NTD)" evidence="1">
    <location>
        <begin position="1"/>
        <end position="233"/>
    </location>
</feature>
<feature type="region of interest" description="Alpha C-terminal domain (alpha-CTD)" evidence="1">
    <location>
        <begin position="267"/>
        <end position="333"/>
    </location>
</feature>
<organism>
    <name type="scientific">Aethionema grandiflorum</name>
    <name type="common">Persian stone-cress</name>
    <dbReference type="NCBI Taxonomy" id="72657"/>
    <lineage>
        <taxon>Eukaryota</taxon>
        <taxon>Viridiplantae</taxon>
        <taxon>Streptophyta</taxon>
        <taxon>Embryophyta</taxon>
        <taxon>Tracheophyta</taxon>
        <taxon>Spermatophyta</taxon>
        <taxon>Magnoliopsida</taxon>
        <taxon>eudicotyledons</taxon>
        <taxon>Gunneridae</taxon>
        <taxon>Pentapetalae</taxon>
        <taxon>rosids</taxon>
        <taxon>malvids</taxon>
        <taxon>Brassicales</taxon>
        <taxon>Brassicaceae</taxon>
        <taxon>Aethionemeae</taxon>
        <taxon>Aethionema</taxon>
    </lineage>
</organism>
<sequence length="333" mass="38546">MVREKVKVSTRTLQWKCVESRRDSKRLYYGRFILSPLMKGQADTIGIAMRRALLGEMEGTCITRAKSENIPHDYSNIVGIQESVHEILMNLQEIVLRSNLYGTCNALICVQGPGYITARDIILPPSVEIMDNTQHIATLTEPIDLCIGLQIERNRGYSLKMPNPFEDGSYPIDALFMPVQNANHSIHSYGTGNENQEILFLEIWTNGNLTPKEALHEASRNLINLFIPFLHVEEETFYLENNEDKVTLPLFPFHNRLVKLRKKKKELVFQYIFIDQLELPPRIYNCLKKSNIHTLLDLLNNSQEDLIKIEHFHIEDVKKILDILEKNRKFISN</sequence>
<geneLocation type="chloroplast"/>
<gene>
    <name evidence="1" type="primary">rpoA</name>
</gene>
<dbReference type="EC" id="2.7.7.6" evidence="1"/>
<dbReference type="EMBL" id="AP009367">
    <property type="protein sequence ID" value="BAF49886.1"/>
    <property type="molecule type" value="Genomic_DNA"/>
</dbReference>
<dbReference type="RefSeq" id="YP_001123062.1">
    <property type="nucleotide sequence ID" value="NC_009266.1"/>
</dbReference>
<dbReference type="SMR" id="A4QJN1"/>
<dbReference type="GeneID" id="4962310"/>
<dbReference type="GO" id="GO:0009507">
    <property type="term" value="C:chloroplast"/>
    <property type="evidence" value="ECO:0007669"/>
    <property type="project" value="UniProtKB-SubCell"/>
</dbReference>
<dbReference type="GO" id="GO:0000428">
    <property type="term" value="C:DNA-directed RNA polymerase complex"/>
    <property type="evidence" value="ECO:0007669"/>
    <property type="project" value="UniProtKB-KW"/>
</dbReference>
<dbReference type="GO" id="GO:0005739">
    <property type="term" value="C:mitochondrion"/>
    <property type="evidence" value="ECO:0007669"/>
    <property type="project" value="GOC"/>
</dbReference>
<dbReference type="GO" id="GO:0003677">
    <property type="term" value="F:DNA binding"/>
    <property type="evidence" value="ECO:0007669"/>
    <property type="project" value="UniProtKB-UniRule"/>
</dbReference>
<dbReference type="GO" id="GO:0003899">
    <property type="term" value="F:DNA-directed RNA polymerase activity"/>
    <property type="evidence" value="ECO:0007669"/>
    <property type="project" value="UniProtKB-UniRule"/>
</dbReference>
<dbReference type="GO" id="GO:0046983">
    <property type="term" value="F:protein dimerization activity"/>
    <property type="evidence" value="ECO:0007669"/>
    <property type="project" value="InterPro"/>
</dbReference>
<dbReference type="GO" id="GO:0006351">
    <property type="term" value="P:DNA-templated transcription"/>
    <property type="evidence" value="ECO:0007669"/>
    <property type="project" value="UniProtKB-UniRule"/>
</dbReference>
<dbReference type="CDD" id="cd06928">
    <property type="entry name" value="RNAP_alpha_NTD"/>
    <property type="match status" value="1"/>
</dbReference>
<dbReference type="FunFam" id="2.170.120.12:FF:000001">
    <property type="entry name" value="DNA-directed RNA polymerase subunit alpha"/>
    <property type="match status" value="1"/>
</dbReference>
<dbReference type="FunFam" id="3.30.1360.10:FF:000039">
    <property type="entry name" value="DNA-directed RNA polymerase subunit alpha"/>
    <property type="match status" value="1"/>
</dbReference>
<dbReference type="Gene3D" id="1.10.150.20">
    <property type="entry name" value="5' to 3' exonuclease, C-terminal subdomain"/>
    <property type="match status" value="1"/>
</dbReference>
<dbReference type="Gene3D" id="2.170.120.12">
    <property type="entry name" value="DNA-directed RNA polymerase, insert domain"/>
    <property type="match status" value="1"/>
</dbReference>
<dbReference type="Gene3D" id="3.30.1360.10">
    <property type="entry name" value="RNA polymerase, RBP11-like subunit"/>
    <property type="match status" value="1"/>
</dbReference>
<dbReference type="HAMAP" id="MF_00059">
    <property type="entry name" value="RNApol_bact_RpoA"/>
    <property type="match status" value="1"/>
</dbReference>
<dbReference type="InterPro" id="IPR011262">
    <property type="entry name" value="DNA-dir_RNA_pol_insert"/>
</dbReference>
<dbReference type="InterPro" id="IPR011263">
    <property type="entry name" value="DNA-dir_RNA_pol_RpoA/D/Rpb3"/>
</dbReference>
<dbReference type="InterPro" id="IPR011773">
    <property type="entry name" value="DNA-dir_RpoA"/>
</dbReference>
<dbReference type="InterPro" id="IPR036603">
    <property type="entry name" value="RBP11-like"/>
</dbReference>
<dbReference type="InterPro" id="IPR011260">
    <property type="entry name" value="RNAP_asu_C"/>
</dbReference>
<dbReference type="InterPro" id="IPR036643">
    <property type="entry name" value="RNApol_insert_sf"/>
</dbReference>
<dbReference type="NCBIfam" id="TIGR02027">
    <property type="entry name" value="rpoA"/>
    <property type="match status" value="1"/>
</dbReference>
<dbReference type="Pfam" id="PF01000">
    <property type="entry name" value="RNA_pol_A_bac"/>
    <property type="match status" value="1"/>
</dbReference>
<dbReference type="Pfam" id="PF03118">
    <property type="entry name" value="RNA_pol_A_CTD"/>
    <property type="match status" value="1"/>
</dbReference>
<dbReference type="Pfam" id="PF01193">
    <property type="entry name" value="RNA_pol_L"/>
    <property type="match status" value="1"/>
</dbReference>
<dbReference type="SMART" id="SM00662">
    <property type="entry name" value="RPOLD"/>
    <property type="match status" value="1"/>
</dbReference>
<dbReference type="SUPFAM" id="SSF47789">
    <property type="entry name" value="C-terminal domain of RNA polymerase alpha subunit"/>
    <property type="match status" value="1"/>
</dbReference>
<dbReference type="SUPFAM" id="SSF56553">
    <property type="entry name" value="Insert subdomain of RNA polymerase alpha subunit"/>
    <property type="match status" value="1"/>
</dbReference>
<dbReference type="SUPFAM" id="SSF55257">
    <property type="entry name" value="RBP11-like subunits of RNA polymerase"/>
    <property type="match status" value="1"/>
</dbReference>
<reference key="1">
    <citation type="submission" date="2007-03" db="EMBL/GenBank/DDBJ databases">
        <title>Sequencing analysis of Aethionema grandiflorum chloroplast DNA.</title>
        <authorList>
            <person name="Hosouchi T."/>
            <person name="Tsuruoka H."/>
            <person name="Kotani H."/>
        </authorList>
    </citation>
    <scope>NUCLEOTIDE SEQUENCE [LARGE SCALE GENOMIC DNA]</scope>
</reference>
<accession>A4QJN1</accession>
<evidence type="ECO:0000255" key="1">
    <source>
        <dbReference type="HAMAP-Rule" id="MF_00059"/>
    </source>
</evidence>
<keyword id="KW-0150">Chloroplast</keyword>
<keyword id="KW-0240">DNA-directed RNA polymerase</keyword>
<keyword id="KW-0548">Nucleotidyltransferase</keyword>
<keyword id="KW-0934">Plastid</keyword>
<keyword id="KW-0804">Transcription</keyword>
<keyword id="KW-0808">Transferase</keyword>
<protein>
    <recommendedName>
        <fullName evidence="1">DNA-directed RNA polymerase subunit alpha</fullName>
        <shortName evidence="1">PEP</shortName>
        <ecNumber evidence="1">2.7.7.6</ecNumber>
    </recommendedName>
    <alternativeName>
        <fullName evidence="1">Plastid-encoded RNA polymerase subunit alpha</fullName>
        <shortName evidence="1">RNA polymerase subunit alpha</shortName>
    </alternativeName>
</protein>
<comment type="function">
    <text evidence="1">DNA-dependent RNA polymerase catalyzes the transcription of DNA into RNA using the four ribonucleoside triphosphates as substrates.</text>
</comment>
<comment type="catalytic activity">
    <reaction evidence="1">
        <text>RNA(n) + a ribonucleoside 5'-triphosphate = RNA(n+1) + diphosphate</text>
        <dbReference type="Rhea" id="RHEA:21248"/>
        <dbReference type="Rhea" id="RHEA-COMP:14527"/>
        <dbReference type="Rhea" id="RHEA-COMP:17342"/>
        <dbReference type="ChEBI" id="CHEBI:33019"/>
        <dbReference type="ChEBI" id="CHEBI:61557"/>
        <dbReference type="ChEBI" id="CHEBI:140395"/>
        <dbReference type="EC" id="2.7.7.6"/>
    </reaction>
</comment>
<comment type="subunit">
    <text evidence="1">In plastids the minimal PEP RNA polymerase catalytic core is composed of four subunits: alpha, beta, beta', and beta''. When a (nuclear-encoded) sigma factor is associated with the core the holoenzyme is formed, which can initiate transcription.</text>
</comment>
<comment type="subcellular location">
    <subcellularLocation>
        <location>Plastid</location>
        <location>Chloroplast</location>
    </subcellularLocation>
</comment>
<comment type="domain">
    <text evidence="1">The N-terminal domain is essential for RNAP assembly and basal transcription, whereas the C-terminal domain is involved in interaction with transcriptional regulators and with upstream promoter elements.</text>
</comment>
<comment type="similarity">
    <text evidence="1">Belongs to the RNA polymerase alpha chain family.</text>
</comment>
<proteinExistence type="inferred from homology"/>